<sequence>MDDTQHFCLRWNNYQSSITSAFENLRDDEAFVDVTLACEGRSIKAHRVVLSACSPYFRELLKSTPCKHPVILLQDVNFMDLHALVEFIYHGEVNVHQKSLQSFLKTAEVLRVSGLTQQQAEDTHSHLAQIQNLANSGGRTPLNTHTQSLPHPHHGSLHDDGGSSTLFSRQGAGSPPPTAVPSLPSHINNQLLKRMAMMHRSSAAAAAEETSHAFKRLRGSDNSLPLSGAVGSGSNNNSPDLPPLHARSASPQQTPADFSTIKHHNNNNTPPLKEEKRNGPTGNGNSGNGNGNGNGASNGNGISISDKLGSLTPSPLARAGADDVKSEPMDMVCSNNNANANDEHSNDSTGEHDANRSSSGDGGKGSLSSGNDEEIGDGLASHHAAPQFIMSPAENKMFHAAAFNFPNIDPSALLGLNTQLQQSGDLAVSPQGKLTTNATTTTTTINNSITNNNNNNNNNNYDYSLPTKNSNSQKTPSPTTTTLTTPTTTTPTRPTAITSASGICGLNLSTFAANGSSSGGSNGGLSMTALLPQQQQQQQQQHQMSQQQQQQQQQQQQQGNSSSGQQQQPNGILACSTPKANTPTTTQQQMYAAVMAAAASASASTSGSANSSLNNSNSTLNTSGGLNNSASGGDDFRCNPCNKNLSSLTRLKRHIQNVHMRPTKEPVCNICKRVYSSLNSLRNHKSIYHRNLKQPKQEPGVGATQAAANSFYHQQHQQQQLNHHSSS</sequence>
<organism>
    <name type="scientific">Drosophila melanogaster</name>
    <name type="common">Fruit fly</name>
    <dbReference type="NCBI Taxonomy" id="7227"/>
    <lineage>
        <taxon>Eukaryota</taxon>
        <taxon>Metazoa</taxon>
        <taxon>Ecdysozoa</taxon>
        <taxon>Arthropoda</taxon>
        <taxon>Hexapoda</taxon>
        <taxon>Insecta</taxon>
        <taxon>Pterygota</taxon>
        <taxon>Neoptera</taxon>
        <taxon>Endopterygota</taxon>
        <taxon>Diptera</taxon>
        <taxon>Brachycera</taxon>
        <taxon>Muscomorpha</taxon>
        <taxon>Ephydroidea</taxon>
        <taxon>Drosophilidae</taxon>
        <taxon>Drosophila</taxon>
        <taxon>Sophophora</taxon>
    </lineage>
</organism>
<keyword id="KW-0025">Alternative splicing</keyword>
<keyword id="KW-0217">Developmental protein</keyword>
<keyword id="KW-0238">DNA-binding</keyword>
<keyword id="KW-0479">Metal-binding</keyword>
<keyword id="KW-0539">Nucleus</keyword>
<keyword id="KW-1185">Reference proteome</keyword>
<keyword id="KW-0677">Repeat</keyword>
<keyword id="KW-0862">Zinc</keyword>
<keyword id="KW-0863">Zinc-finger</keyword>
<proteinExistence type="evidence at protein level"/>
<evidence type="ECO:0000255" key="1">
    <source>
        <dbReference type="PROSITE-ProRule" id="PRU00037"/>
    </source>
</evidence>
<evidence type="ECO:0000255" key="2">
    <source>
        <dbReference type="PROSITE-ProRule" id="PRU00042"/>
    </source>
</evidence>
<evidence type="ECO:0000256" key="3">
    <source>
        <dbReference type="SAM" id="MobiDB-lite"/>
    </source>
</evidence>
<evidence type="ECO:0000269" key="4">
    <source>
    </source>
</evidence>
<evidence type="ECO:0000269" key="5">
    <source>
    </source>
</evidence>
<evidence type="ECO:0000305" key="6"/>
<dbReference type="EMBL" id="X54666">
    <property type="protein sequence ID" value="CAA38477.1"/>
    <property type="molecule type" value="mRNA"/>
</dbReference>
<dbReference type="EMBL" id="X54665">
    <property type="protein sequence ID" value="CAA38476.1"/>
    <property type="molecule type" value="mRNA"/>
</dbReference>
<dbReference type="EMBL" id="X54663">
    <property type="protein sequence ID" value="CAA38474.1"/>
    <property type="molecule type" value="mRNA"/>
</dbReference>
<dbReference type="EMBL" id="X54664">
    <property type="protein sequence ID" value="CAA38475.1"/>
    <property type="molecule type" value="mRNA"/>
</dbReference>
<dbReference type="EMBL" id="AE014298">
    <property type="protein sequence ID" value="AAF45648.1"/>
    <property type="molecule type" value="Genomic_DNA"/>
</dbReference>
<dbReference type="EMBL" id="AE014298">
    <property type="protein sequence ID" value="AAF45651.2"/>
    <property type="molecule type" value="Genomic_DNA"/>
</dbReference>
<dbReference type="EMBL" id="AE014298">
    <property type="protein sequence ID" value="AAN09054.1"/>
    <property type="molecule type" value="Genomic_DNA"/>
</dbReference>
<dbReference type="EMBL" id="AL009146">
    <property type="protein sequence ID" value="CAA15629.1"/>
    <property type="status" value="ALT_SEQ"/>
    <property type="molecule type" value="Genomic_DNA"/>
</dbReference>
<dbReference type="EMBL" id="AL009146">
    <property type="protein sequence ID" value="CAA15626.1"/>
    <property type="molecule type" value="Genomic_DNA"/>
</dbReference>
<dbReference type="EMBL" id="AL009146">
    <property type="protein sequence ID" value="CAA15628.1"/>
    <property type="molecule type" value="Genomic_DNA"/>
</dbReference>
<dbReference type="PIR" id="S21912">
    <property type="entry name" value="S21912"/>
</dbReference>
<dbReference type="PIR" id="S21913">
    <property type="entry name" value="S21913"/>
</dbReference>
<dbReference type="PIR" id="S21914">
    <property type="entry name" value="S21914"/>
</dbReference>
<dbReference type="RefSeq" id="NP_001188525.1">
    <molecule id="Q01295-4"/>
    <property type="nucleotide sequence ID" value="NM_001201596.3"/>
</dbReference>
<dbReference type="RefSeq" id="NP_001188526.1">
    <property type="nucleotide sequence ID" value="NM_001201597.1"/>
</dbReference>
<dbReference type="RefSeq" id="NP_001188527.1">
    <property type="nucleotide sequence ID" value="NM_001201598.1"/>
</dbReference>
<dbReference type="RefSeq" id="NP_001245462.1">
    <molecule id="Q01295-2"/>
    <property type="nucleotide sequence ID" value="NM_001258533.1"/>
</dbReference>
<dbReference type="RefSeq" id="NP_001401048.1">
    <molecule id="Q01295-5"/>
    <property type="nucleotide sequence ID" value="NM_001414056.1"/>
</dbReference>
<dbReference type="RefSeq" id="NP_524759.2">
    <property type="nucleotide sequence ID" value="NM_080020.4"/>
</dbReference>
<dbReference type="RefSeq" id="NP_726749.2">
    <molecule id="Q01295-4"/>
    <property type="nucleotide sequence ID" value="NM_166893.3"/>
</dbReference>
<dbReference type="RefSeq" id="NP_726750.1">
    <molecule id="Q01295-5"/>
    <property type="nucleotide sequence ID" value="NM_166894.4"/>
</dbReference>
<dbReference type="RefSeq" id="NP_726754.1">
    <molecule id="Q01295-2"/>
    <property type="nucleotide sequence ID" value="NM_166898.2"/>
</dbReference>
<dbReference type="SMR" id="Q01295"/>
<dbReference type="BioGRID" id="69091">
    <property type="interactions" value="44"/>
</dbReference>
<dbReference type="IntAct" id="Q01295">
    <property type="interactions" value="13"/>
</dbReference>
<dbReference type="DNASU" id="44505"/>
<dbReference type="EnsemblMetazoa" id="FBtr0070265">
    <molecule id="Q01295-5"/>
    <property type="protein sequence ID" value="FBpp0070255"/>
    <property type="gene ID" value="FBgn0283451"/>
</dbReference>
<dbReference type="EnsemblMetazoa" id="FBtr0070266">
    <molecule id="Q01295-2"/>
    <property type="protein sequence ID" value="FBpp0070256"/>
    <property type="gene ID" value="FBgn0283451"/>
</dbReference>
<dbReference type="EnsemblMetazoa" id="FBtr0300429">
    <molecule id="Q01295-4"/>
    <property type="protein sequence ID" value="FBpp0289658"/>
    <property type="gene ID" value="FBgn0283451"/>
</dbReference>
<dbReference type="EnsemblMetazoa" id="FBtr0303562">
    <molecule id="Q01295-4"/>
    <property type="protein sequence ID" value="FBpp0292595"/>
    <property type="gene ID" value="FBgn0283451"/>
</dbReference>
<dbReference type="EnsemblMetazoa" id="FBtr0308319">
    <molecule id="Q01295-2"/>
    <property type="protein sequence ID" value="FBpp0300638"/>
    <property type="gene ID" value="FBgn0283451"/>
</dbReference>
<dbReference type="EnsemblMetazoa" id="FBtr0481620">
    <molecule id="Q01295-5"/>
    <property type="protein sequence ID" value="FBpp0428402"/>
    <property type="gene ID" value="FBgn0283451"/>
</dbReference>
<dbReference type="GeneID" id="44505"/>
<dbReference type="AGR" id="FB:FBgn0283451"/>
<dbReference type="CTD" id="103946"/>
<dbReference type="FlyBase" id="FBgn0283451">
    <property type="gene designation" value="br"/>
</dbReference>
<dbReference type="VEuPathDB" id="VectorBase:FBgn0283451"/>
<dbReference type="OMA" id="IYTYHKT"/>
<dbReference type="OrthoDB" id="10261408at2759"/>
<dbReference type="SignaLink" id="Q01295"/>
<dbReference type="BioGRID-ORCS" id="44505">
    <property type="hits" value="1 hit in 1 CRISPR screen"/>
</dbReference>
<dbReference type="ChiTaRS" id="br">
    <property type="organism name" value="fly"/>
</dbReference>
<dbReference type="GenomeRNAi" id="44505"/>
<dbReference type="Proteomes" id="UP000000803">
    <property type="component" value="Chromosome X"/>
</dbReference>
<dbReference type="Bgee" id="FBgn0283451">
    <property type="expression patterns" value="Expressed in posterior terminal follicle cell in ovary and 246 other cell types or tissues"/>
</dbReference>
<dbReference type="ExpressionAtlas" id="Q01295">
    <property type="expression patterns" value="baseline and differential"/>
</dbReference>
<dbReference type="GO" id="GO:0005634">
    <property type="term" value="C:nucleus"/>
    <property type="evidence" value="ECO:0000314"/>
    <property type="project" value="FlyBase"/>
</dbReference>
<dbReference type="GO" id="GO:0003677">
    <property type="term" value="F:DNA binding"/>
    <property type="evidence" value="ECO:0000314"/>
    <property type="project" value="FlyBase"/>
</dbReference>
<dbReference type="GO" id="GO:0000977">
    <property type="term" value="F:RNA polymerase II transcription regulatory region sequence-specific DNA binding"/>
    <property type="evidence" value="ECO:0000314"/>
    <property type="project" value="FlyBase"/>
</dbReference>
<dbReference type="GO" id="GO:0008270">
    <property type="term" value="F:zinc ion binding"/>
    <property type="evidence" value="ECO:0007669"/>
    <property type="project" value="UniProtKB-KW"/>
</dbReference>
<dbReference type="GO" id="GO:0006914">
    <property type="term" value="P:autophagy"/>
    <property type="evidence" value="ECO:0000315"/>
    <property type="project" value="FlyBase"/>
</dbReference>
<dbReference type="GO" id="GO:0071390">
    <property type="term" value="P:cellular response to ecdysone"/>
    <property type="evidence" value="ECO:0000315"/>
    <property type="project" value="FlyBase"/>
</dbReference>
<dbReference type="GO" id="GO:0001752">
    <property type="term" value="P:compound eye photoreceptor fate commitment"/>
    <property type="evidence" value="ECO:0000315"/>
    <property type="project" value="FlyBase"/>
</dbReference>
<dbReference type="GO" id="GO:0048813">
    <property type="term" value="P:dendrite morphogenesis"/>
    <property type="evidence" value="ECO:0000315"/>
    <property type="project" value="FlyBase"/>
</dbReference>
<dbReference type="GO" id="GO:0007562">
    <property type="term" value="P:eclosion"/>
    <property type="evidence" value="ECO:0000270"/>
    <property type="project" value="FlyBase"/>
</dbReference>
<dbReference type="GO" id="GO:0030707">
    <property type="term" value="P:follicle cell of egg chamber development"/>
    <property type="evidence" value="ECO:0000315"/>
    <property type="project" value="FlyBase"/>
</dbReference>
<dbReference type="GO" id="GO:0042332">
    <property type="term" value="P:gravitaxis"/>
    <property type="evidence" value="ECO:0000315"/>
    <property type="project" value="FlyBase"/>
</dbReference>
<dbReference type="GO" id="GO:0048808">
    <property type="term" value="P:male genitalia morphogenesis"/>
    <property type="evidence" value="ECO:0000315"/>
    <property type="project" value="FlyBase"/>
</dbReference>
<dbReference type="GO" id="GO:0055001">
    <property type="term" value="P:muscle cell development"/>
    <property type="evidence" value="ECO:0000316"/>
    <property type="project" value="FlyBase"/>
</dbReference>
<dbReference type="GO" id="GO:0010629">
    <property type="term" value="P:negative regulation of gene expression"/>
    <property type="evidence" value="ECO:0000315"/>
    <property type="project" value="FlyBase"/>
</dbReference>
<dbReference type="GO" id="GO:0048477">
    <property type="term" value="P:oogenesis"/>
    <property type="evidence" value="ECO:0000315"/>
    <property type="project" value="FlyBase"/>
</dbReference>
<dbReference type="GO" id="GO:0045944">
    <property type="term" value="P:positive regulation of transcription by RNA polymerase II"/>
    <property type="evidence" value="ECO:0000315"/>
    <property type="project" value="FlyBase"/>
</dbReference>
<dbReference type="GO" id="GO:0007458">
    <property type="term" value="P:progression of morphogenetic furrow involved in compound eye morphogenesis"/>
    <property type="evidence" value="ECO:0000315"/>
    <property type="project" value="FlyBase"/>
</dbReference>
<dbReference type="GO" id="GO:0040034">
    <property type="term" value="P:regulation of development, heterochronic"/>
    <property type="evidence" value="ECO:0000315"/>
    <property type="project" value="FlyBase"/>
</dbReference>
<dbReference type="GO" id="GO:0006357">
    <property type="term" value="P:regulation of transcription by RNA polymerase II"/>
    <property type="evidence" value="ECO:0000318"/>
    <property type="project" value="GO_Central"/>
</dbReference>
<dbReference type="GO" id="GO:0035075">
    <property type="term" value="P:response to ecdysone"/>
    <property type="evidence" value="ECO:0000315"/>
    <property type="project" value="FlyBase"/>
</dbReference>
<dbReference type="GO" id="GO:0009608">
    <property type="term" value="P:response to symbiont"/>
    <property type="evidence" value="ECO:0000315"/>
    <property type="project" value="FlyBase"/>
</dbReference>
<dbReference type="GO" id="GO:0035070">
    <property type="term" value="P:salivary gland histolysis"/>
    <property type="evidence" value="ECO:0000315"/>
    <property type="project" value="FlyBase"/>
</dbReference>
<dbReference type="CDD" id="cd18315">
    <property type="entry name" value="BTB_POZ_BAB-like"/>
    <property type="match status" value="1"/>
</dbReference>
<dbReference type="FunFam" id="3.30.710.10:FF:000118">
    <property type="entry name" value="Abrupt, isoform B"/>
    <property type="match status" value="1"/>
</dbReference>
<dbReference type="Gene3D" id="3.30.160.60">
    <property type="entry name" value="Classic Zinc Finger"/>
    <property type="match status" value="1"/>
</dbReference>
<dbReference type="Gene3D" id="3.30.710.10">
    <property type="entry name" value="Potassium Channel Kv1.1, Chain A"/>
    <property type="match status" value="1"/>
</dbReference>
<dbReference type="InterPro" id="IPR000210">
    <property type="entry name" value="BTB/POZ_dom"/>
</dbReference>
<dbReference type="InterPro" id="IPR051095">
    <property type="entry name" value="Dros_DevTransReg"/>
</dbReference>
<dbReference type="InterPro" id="IPR011333">
    <property type="entry name" value="SKP1/BTB/POZ_sf"/>
</dbReference>
<dbReference type="InterPro" id="IPR036236">
    <property type="entry name" value="Znf_C2H2_sf"/>
</dbReference>
<dbReference type="InterPro" id="IPR013087">
    <property type="entry name" value="Znf_C2H2_type"/>
</dbReference>
<dbReference type="PANTHER" id="PTHR23110:SF99">
    <property type="entry name" value="BROAD-COMPLEX CORE PROTEIN ISOFORM 6"/>
    <property type="match status" value="1"/>
</dbReference>
<dbReference type="PANTHER" id="PTHR23110">
    <property type="entry name" value="BTB DOMAIN TRANSCRIPTION FACTOR"/>
    <property type="match status" value="1"/>
</dbReference>
<dbReference type="Pfam" id="PF00651">
    <property type="entry name" value="BTB"/>
    <property type="match status" value="1"/>
</dbReference>
<dbReference type="Pfam" id="PF13912">
    <property type="entry name" value="zf-C2H2_6"/>
    <property type="match status" value="1"/>
</dbReference>
<dbReference type="SMART" id="SM00225">
    <property type="entry name" value="BTB"/>
    <property type="match status" value="1"/>
</dbReference>
<dbReference type="SMART" id="SM00355">
    <property type="entry name" value="ZnF_C2H2"/>
    <property type="match status" value="2"/>
</dbReference>
<dbReference type="SUPFAM" id="SSF57667">
    <property type="entry name" value="beta-beta-alpha zinc fingers"/>
    <property type="match status" value="1"/>
</dbReference>
<dbReference type="SUPFAM" id="SSF54695">
    <property type="entry name" value="POZ domain"/>
    <property type="match status" value="1"/>
</dbReference>
<dbReference type="PROSITE" id="PS50097">
    <property type="entry name" value="BTB"/>
    <property type="match status" value="1"/>
</dbReference>
<dbReference type="PROSITE" id="PS00028">
    <property type="entry name" value="ZINC_FINGER_C2H2_1"/>
    <property type="match status" value="2"/>
</dbReference>
<dbReference type="PROSITE" id="PS50157">
    <property type="entry name" value="ZINC_FINGER_C2H2_2"/>
    <property type="match status" value="2"/>
</dbReference>
<protein>
    <recommendedName>
        <fullName>Broad-complex core protein isoforms 1/2/3/4/5</fullName>
    </recommendedName>
</protein>
<gene>
    <name type="primary">br</name>
    <name type="synonym">Br-C</name>
    <name type="ORF">CG11491</name>
</gene>
<feature type="chain" id="PRO_0000047069" description="Broad-complex core protein isoforms 1/2/3/4/5">
    <location>
        <begin position="1"/>
        <end position="727"/>
    </location>
</feature>
<feature type="domain" description="BTB" evidence="1">
    <location>
        <begin position="32"/>
        <end position="97"/>
    </location>
</feature>
<feature type="zinc finger region" description="C2H2-type 1" evidence="2">
    <location>
        <begin position="636"/>
        <end position="659"/>
    </location>
</feature>
<feature type="zinc finger region" description="C2H2-type 2" evidence="2">
    <location>
        <begin position="666"/>
        <end position="689"/>
    </location>
</feature>
<feature type="region of interest" description="Disordered" evidence="3">
    <location>
        <begin position="135"/>
        <end position="185"/>
    </location>
</feature>
<feature type="region of interest" description="Disordered" evidence="3">
    <location>
        <begin position="218"/>
        <end position="378"/>
    </location>
</feature>
<feature type="region of interest" description="Disordered" evidence="3">
    <location>
        <begin position="445"/>
        <end position="496"/>
    </location>
</feature>
<feature type="region of interest" description="Disordered" evidence="3">
    <location>
        <begin position="532"/>
        <end position="583"/>
    </location>
</feature>
<feature type="region of interest" description="Disordered" evidence="3">
    <location>
        <begin position="604"/>
        <end position="626"/>
    </location>
</feature>
<feature type="region of interest" description="Disordered" evidence="3">
    <location>
        <begin position="694"/>
        <end position="727"/>
    </location>
</feature>
<feature type="compositionally biased region" description="Polar residues" evidence="3">
    <location>
        <begin position="135"/>
        <end position="149"/>
    </location>
</feature>
<feature type="compositionally biased region" description="Low complexity" evidence="3">
    <location>
        <begin position="227"/>
        <end position="238"/>
    </location>
</feature>
<feature type="compositionally biased region" description="Gly residues" evidence="3">
    <location>
        <begin position="281"/>
        <end position="298"/>
    </location>
</feature>
<feature type="compositionally biased region" description="Basic and acidic residues" evidence="3">
    <location>
        <begin position="341"/>
        <end position="355"/>
    </location>
</feature>
<feature type="compositionally biased region" description="Low complexity" evidence="3">
    <location>
        <begin position="445"/>
        <end position="460"/>
    </location>
</feature>
<feature type="compositionally biased region" description="Low complexity" evidence="3">
    <location>
        <begin position="475"/>
        <end position="495"/>
    </location>
</feature>
<feature type="compositionally biased region" description="Low complexity" evidence="3">
    <location>
        <begin position="533"/>
        <end position="568"/>
    </location>
</feature>
<feature type="compositionally biased region" description="Low complexity" evidence="3">
    <location>
        <begin position="713"/>
        <end position="727"/>
    </location>
</feature>
<feature type="splice variant" id="VSP_006836" description="In isoform 2." evidence="6">
    <location>
        <begin position="432"/>
        <end position="495"/>
    </location>
</feature>
<feature type="splice variant" id="VSP_006835" description="In isoform 3." evidence="6">
    <location>
        <begin position="432"/>
        <end position="478"/>
    </location>
</feature>
<feature type="splice variant" id="VSP_006839" description="In isoform 5." evidence="6">
    <original>KLTTNATTTTTTINNSITNNNNNNNNNNYDYSLPTKNSNSQKTPSPTTTTLTTPTTTTPTRPTAITSASGICGLNLSTFAANGSSSGGSNGGLSMTALLPQQQQQQQQQHQMSQQQQQQQQQQQQQGNSSSGQQQQPNGILACSTPKANTPTTTQQQMYAAVMAAAASASASTSGSANSSLNNSNSTLNTSGGLNNSASGGDDFRCNPCNKNLSSLTRLKRHIQNVHMRPTKEPVCNICKRVYSSLNSLRNHKSIYHRNLKQPKQEPGVGATQAAANSFYHQQHQQQQLNHHSSS</original>
    <variation>PHSITRSAATSPTSSTSSPPSPPTALISPTSSLKGSLAAAVYSLHSHAHGHVLGHATSPPRPGSVGSSVGSNLCTSTSMGCGVNSGNNSGNNNGNNANNNSNNGNATNNNNNSSSSSTSPGSQATAAGGTVTQAGTPPLPLRMPPPTSGGINEPQECPYCRRTFSCYYSLKRHFQDKHEQSDTLYVCEFCHRRYRTKNSLTTHKSLQHRGSSGMLKRLLKTTAIKHGLVGHGHGHGHVHHPHAHHHALSHPRTSLYDFTSELGQPPPGIQ</variation>
    <location>
        <begin position="433"/>
        <end position="727"/>
    </location>
</feature>
<feature type="splice variant" id="VSP_006837" description="In isoform 4." evidence="6">
    <original>KLTTNATTTTTTINNSITNNNNNNNNNNYDYSLPTKNSNSQKTPSPTTTTLTTPTTTTPTRPTAITSASGICGLNLSTFAAN</original>
    <variation>NSPKKLFSCQLCGKLLCSKASLKRHIADKHAVRQEEYRCAICERVYCSRNSLMTHIYTYHKSRPGEMEMKDIKLYNQFNSSI</variation>
    <location>
        <begin position="433"/>
        <end position="514"/>
    </location>
</feature>
<feature type="splice variant" id="VSP_006838" description="In isoform 4." evidence="6">
    <location>
        <begin position="515"/>
        <end position="727"/>
    </location>
</feature>
<feature type="sequence conflict" description="In Ref. 1; CAA38477/CAA38474/CAA38475." evidence="6" ref="1">
    <original>V</original>
    <variation>L</variation>
    <location>
        <position position="230"/>
    </location>
</feature>
<feature type="sequence conflict" description="In Ref. 2." evidence="6" ref="2">
    <location>
        <begin position="457"/>
        <end position="459"/>
    </location>
</feature>
<feature type="sequence conflict" description="In Ref. 1; CAA38477." evidence="6" ref="1">
    <original>N</original>
    <variation>NN</variation>
    <location>
        <position position="460"/>
    </location>
</feature>
<comment type="function">
    <text>Broad-complex proteins are required for puffing and transcription of salivary gland late genes during metamorphosis.</text>
</comment>
<comment type="subcellular location">
    <subcellularLocation>
        <location>Nucleus</location>
    </subcellularLocation>
</comment>
<comment type="alternative products">
    <event type="alternative splicing"/>
    <isoform>
        <id>Q01295-1</id>
        <name>1</name>
        <name>BRCORE-TNT1-Q1-Z1</name>
        <sequence type="displayed"/>
    </isoform>
    <isoform>
        <id>Q01295-2</id>
        <name>2</name>
        <name>BRCORE-Q1-Z1</name>
        <sequence type="described" ref="VSP_006836"/>
    </isoform>
    <isoform>
        <id>Q01295-3</id>
        <name>3</name>
        <name>BRCORE-Q2-Z1</name>
        <sequence type="described" ref="VSP_006835"/>
    </isoform>
    <isoform>
        <id>Q01295-4</id>
        <name>4</name>
        <name>BRCORE-Z2</name>
        <sequence type="described" ref="VSP_006837 VSP_006838"/>
    </isoform>
    <isoform>
        <id>Q01295-5</id>
        <name>5</name>
        <name>BRCORE-NS-Z3</name>
        <sequence type="described" ref="VSP_006839"/>
    </isoform>
    <isoform>
        <id>Q24206-1</id>
        <name>6</name>
        <name>BRCORE-Z4</name>
        <sequence type="external"/>
    </isoform>
</comment>
<comment type="developmental stage">
    <text evidence="4 5">Isoforms Z1 accumulate slowly in mid instar larvae salivary glands at beginning of ecdysone response (94-114 hours of development at puff stage 1) and become the predominant isoform after 6 hours. Levels diminish at puff stage 2 and are moderately abundant in late larvae from stages 3-10. In prepupae, transcripts appear at puff stage 15 onwards, reaching maximum at stages 18-20. In gut, levels remain constant between stages 1-11. In Malpighian tubules, Z1 isoforms are seen at stages 3 and 7, but not at stage 11. In fat body and wing disks, low levels increase between stages 3 and 11. Isoform Z2 accumulates to a high level at the beginning of the ecdysone response during puff stage 1 and abruptly disappears after several hours. In prepupae, transcripts are reinduced at low levels. Low levels are seen in the Malpighian Tubules, gut and fat body between stages 1-11 and high levels in the wing disk. Isoform Z3; in mid instar larval salivary gland transcript accumulates to a high level at the beginning of the ecdysone response, 94-98 hours of development in puff stage 1, and abruptly disappears after several hours. Levels increase by puff stage 3 remaining abundant in late larvae until stage 10, then diminish by stage 11. In prepupae, transcripts are abundant and increase during puff stages 11-14 and 18-20. High levels are seen in Malpighian tubules, gut and fat body between stages 1-11 and low levels in wing disk.</text>
</comment>
<comment type="induction">
    <text>Primary response to 20-hydroxyecdysone in third instar larval imaginal disks.</text>
</comment>
<comment type="sequence caution" evidence="6">
    <conflict type="erroneous gene model prediction">
        <sequence resource="EMBL-CDS" id="CAA15629"/>
    </conflict>
</comment>
<name>BRC1_DROME</name>
<reference key="1">
    <citation type="journal article" date="1991" name="Genetics">
        <title>The Drosophila Broad-Complex encodes a family of related proteins containing zinc fingers.</title>
        <authorList>
            <person name="DiBello P.R."/>
            <person name="Withers D.A."/>
            <person name="Bayer C.A."/>
            <person name="Fristrom J.W."/>
            <person name="Guild G.M."/>
        </authorList>
    </citation>
    <scope>NUCLEOTIDE SEQUENCE [MRNA]</scope>
    <scope>CHARACTERIZATION</scope>
    <scope>ALTERNATIVE SPLICING</scope>
    <source>
        <strain>Oregon-R</strain>
        <tissue>Larva</tissue>
    </source>
</reference>
<reference key="2">
    <citation type="journal article" date="2000" name="Science">
        <title>The genome sequence of Drosophila melanogaster.</title>
        <authorList>
            <person name="Adams M.D."/>
            <person name="Celniker S.E."/>
            <person name="Holt R.A."/>
            <person name="Evans C.A."/>
            <person name="Gocayne J.D."/>
            <person name="Amanatides P.G."/>
            <person name="Scherer S.E."/>
            <person name="Li P.W."/>
            <person name="Hoskins R.A."/>
            <person name="Galle R.F."/>
            <person name="George R.A."/>
            <person name="Lewis S.E."/>
            <person name="Richards S."/>
            <person name="Ashburner M."/>
            <person name="Henderson S.N."/>
            <person name="Sutton G.G."/>
            <person name="Wortman J.R."/>
            <person name="Yandell M.D."/>
            <person name="Zhang Q."/>
            <person name="Chen L.X."/>
            <person name="Brandon R.C."/>
            <person name="Rogers Y.-H.C."/>
            <person name="Blazej R.G."/>
            <person name="Champe M."/>
            <person name="Pfeiffer B.D."/>
            <person name="Wan K.H."/>
            <person name="Doyle C."/>
            <person name="Baxter E.G."/>
            <person name="Helt G."/>
            <person name="Nelson C.R."/>
            <person name="Miklos G.L.G."/>
            <person name="Abril J.F."/>
            <person name="Agbayani A."/>
            <person name="An H.-J."/>
            <person name="Andrews-Pfannkoch C."/>
            <person name="Baldwin D."/>
            <person name="Ballew R.M."/>
            <person name="Basu A."/>
            <person name="Baxendale J."/>
            <person name="Bayraktaroglu L."/>
            <person name="Beasley E.M."/>
            <person name="Beeson K.Y."/>
            <person name="Benos P.V."/>
            <person name="Berman B.P."/>
            <person name="Bhandari D."/>
            <person name="Bolshakov S."/>
            <person name="Borkova D."/>
            <person name="Botchan M.R."/>
            <person name="Bouck J."/>
            <person name="Brokstein P."/>
            <person name="Brottier P."/>
            <person name="Burtis K.C."/>
            <person name="Busam D.A."/>
            <person name="Butler H."/>
            <person name="Cadieu E."/>
            <person name="Center A."/>
            <person name="Chandra I."/>
            <person name="Cherry J.M."/>
            <person name="Cawley S."/>
            <person name="Dahlke C."/>
            <person name="Davenport L.B."/>
            <person name="Davies P."/>
            <person name="de Pablos B."/>
            <person name="Delcher A."/>
            <person name="Deng Z."/>
            <person name="Mays A.D."/>
            <person name="Dew I."/>
            <person name="Dietz S.M."/>
            <person name="Dodson K."/>
            <person name="Doup L.E."/>
            <person name="Downes M."/>
            <person name="Dugan-Rocha S."/>
            <person name="Dunkov B.C."/>
            <person name="Dunn P."/>
            <person name="Durbin K.J."/>
            <person name="Evangelista C.C."/>
            <person name="Ferraz C."/>
            <person name="Ferriera S."/>
            <person name="Fleischmann W."/>
            <person name="Fosler C."/>
            <person name="Gabrielian A.E."/>
            <person name="Garg N.S."/>
            <person name="Gelbart W.M."/>
            <person name="Glasser K."/>
            <person name="Glodek A."/>
            <person name="Gong F."/>
            <person name="Gorrell J.H."/>
            <person name="Gu Z."/>
            <person name="Guan P."/>
            <person name="Harris M."/>
            <person name="Harris N.L."/>
            <person name="Harvey D.A."/>
            <person name="Heiman T.J."/>
            <person name="Hernandez J.R."/>
            <person name="Houck J."/>
            <person name="Hostin D."/>
            <person name="Houston K.A."/>
            <person name="Howland T.J."/>
            <person name="Wei M.-H."/>
            <person name="Ibegwam C."/>
            <person name="Jalali M."/>
            <person name="Kalush F."/>
            <person name="Karpen G.H."/>
            <person name="Ke Z."/>
            <person name="Kennison J.A."/>
            <person name="Ketchum K.A."/>
            <person name="Kimmel B.E."/>
            <person name="Kodira C.D."/>
            <person name="Kraft C.L."/>
            <person name="Kravitz S."/>
            <person name="Kulp D."/>
            <person name="Lai Z."/>
            <person name="Lasko P."/>
            <person name="Lei Y."/>
            <person name="Levitsky A.A."/>
            <person name="Li J.H."/>
            <person name="Li Z."/>
            <person name="Liang Y."/>
            <person name="Lin X."/>
            <person name="Liu X."/>
            <person name="Mattei B."/>
            <person name="McIntosh T.C."/>
            <person name="McLeod M.P."/>
            <person name="McPherson D."/>
            <person name="Merkulov G."/>
            <person name="Milshina N.V."/>
            <person name="Mobarry C."/>
            <person name="Morris J."/>
            <person name="Moshrefi A."/>
            <person name="Mount S.M."/>
            <person name="Moy M."/>
            <person name="Murphy B."/>
            <person name="Murphy L."/>
            <person name="Muzny D.M."/>
            <person name="Nelson D.L."/>
            <person name="Nelson D.R."/>
            <person name="Nelson K.A."/>
            <person name="Nixon K."/>
            <person name="Nusskern D.R."/>
            <person name="Pacleb J.M."/>
            <person name="Palazzolo M."/>
            <person name="Pittman G.S."/>
            <person name="Pan S."/>
            <person name="Pollard J."/>
            <person name="Puri V."/>
            <person name="Reese M.G."/>
            <person name="Reinert K."/>
            <person name="Remington K."/>
            <person name="Saunders R.D.C."/>
            <person name="Scheeler F."/>
            <person name="Shen H."/>
            <person name="Shue B.C."/>
            <person name="Siden-Kiamos I."/>
            <person name="Simpson M."/>
            <person name="Skupski M.P."/>
            <person name="Smith T.J."/>
            <person name="Spier E."/>
            <person name="Spradling A.C."/>
            <person name="Stapleton M."/>
            <person name="Strong R."/>
            <person name="Sun E."/>
            <person name="Svirskas R."/>
            <person name="Tector C."/>
            <person name="Turner R."/>
            <person name="Venter E."/>
            <person name="Wang A.H."/>
            <person name="Wang X."/>
            <person name="Wang Z.-Y."/>
            <person name="Wassarman D.A."/>
            <person name="Weinstock G.M."/>
            <person name="Weissenbach J."/>
            <person name="Williams S.M."/>
            <person name="Woodage T."/>
            <person name="Worley K.C."/>
            <person name="Wu D."/>
            <person name="Yang S."/>
            <person name="Yao Q.A."/>
            <person name="Ye J."/>
            <person name="Yeh R.-F."/>
            <person name="Zaveri J.S."/>
            <person name="Zhan M."/>
            <person name="Zhang G."/>
            <person name="Zhao Q."/>
            <person name="Zheng L."/>
            <person name="Zheng X.H."/>
            <person name="Zhong F.N."/>
            <person name="Zhong W."/>
            <person name="Zhou X."/>
            <person name="Zhu S.C."/>
            <person name="Zhu X."/>
            <person name="Smith H.O."/>
            <person name="Gibbs R.A."/>
            <person name="Myers E.W."/>
            <person name="Rubin G.M."/>
            <person name="Venter J.C."/>
        </authorList>
    </citation>
    <scope>NUCLEOTIDE SEQUENCE [LARGE SCALE GENOMIC DNA]</scope>
    <source>
        <strain>Berkeley</strain>
    </source>
</reference>
<reference key="3">
    <citation type="journal article" date="2002" name="Genome Biol.">
        <title>Annotation of the Drosophila melanogaster euchromatic genome: a systematic review.</title>
        <authorList>
            <person name="Misra S."/>
            <person name="Crosby M.A."/>
            <person name="Mungall C.J."/>
            <person name="Matthews B.B."/>
            <person name="Campbell K.S."/>
            <person name="Hradecky P."/>
            <person name="Huang Y."/>
            <person name="Kaminker J.S."/>
            <person name="Millburn G.H."/>
            <person name="Prochnik S.E."/>
            <person name="Smith C.D."/>
            <person name="Tupy J.L."/>
            <person name="Whitfield E.J."/>
            <person name="Bayraktaroglu L."/>
            <person name="Berman B.P."/>
            <person name="Bettencourt B.R."/>
            <person name="Celniker S.E."/>
            <person name="de Grey A.D.N.J."/>
            <person name="Drysdale R.A."/>
            <person name="Harris N.L."/>
            <person name="Richter J."/>
            <person name="Russo S."/>
            <person name="Schroeder A.J."/>
            <person name="Shu S.Q."/>
            <person name="Stapleton M."/>
            <person name="Yamada C."/>
            <person name="Ashburner M."/>
            <person name="Gelbart W.M."/>
            <person name="Rubin G.M."/>
            <person name="Lewis S.E."/>
        </authorList>
    </citation>
    <scope>GENOME REANNOTATION</scope>
    <scope>ALTERNATIVE SPLICING</scope>
    <source>
        <strain>Berkeley</strain>
    </source>
</reference>
<reference key="4">
    <citation type="journal article" date="2000" name="Science">
        <title>From sequence to chromosome: the tip of the X chromosome of D. melanogaster.</title>
        <authorList>
            <person name="Benos P.V."/>
            <person name="Gatt M.K."/>
            <person name="Ashburner M."/>
            <person name="Murphy L."/>
            <person name="Harris D."/>
            <person name="Barrell B.G."/>
            <person name="Ferraz C."/>
            <person name="Vidal S."/>
            <person name="Brun C."/>
            <person name="Demailles J."/>
            <person name="Cadieu E."/>
            <person name="Dreano S."/>
            <person name="Gloux S."/>
            <person name="Lelaure V."/>
            <person name="Mottier S."/>
            <person name="Galibert F."/>
            <person name="Borkova D."/>
            <person name="Minana B."/>
            <person name="Kafatos F.C."/>
            <person name="Louis C."/>
            <person name="Siden-Kiamos I."/>
            <person name="Bolshakov S."/>
            <person name="Papagiannakis G."/>
            <person name="Spanos L."/>
            <person name="Cox S."/>
            <person name="Madueno E."/>
            <person name="de Pablos B."/>
            <person name="Modolell J."/>
            <person name="Peter A."/>
            <person name="Schoettler P."/>
            <person name="Werner M."/>
            <person name="Mourkioti F."/>
            <person name="Beinert N."/>
            <person name="Dowe G."/>
            <person name="Schaefer U."/>
            <person name="Jaeckle H."/>
            <person name="Bucheton A."/>
            <person name="Callister D.M."/>
            <person name="Campbell L.A."/>
            <person name="Darlamitsou A."/>
            <person name="Henderson N.S."/>
            <person name="McMillan P.J."/>
            <person name="Salles C."/>
            <person name="Tait E.A."/>
            <person name="Valenti P."/>
            <person name="Saunders R.D.C."/>
            <person name="Glover D.M."/>
        </authorList>
    </citation>
    <scope>NUCLEOTIDE SEQUENCE [LARGE SCALE GENOMIC DNA] (ISOFORMS 1; 4 AND 5)</scope>
    <source>
        <strain>Oregon-R</strain>
    </source>
</reference>
<reference key="5">
    <citation type="journal article" date="1996" name="Dev. Biol.">
        <title>A switch in broad-complex zinc-finger isoform expression is regulated posttranscriptionally during the metamorphosis of Drosophila imaginal discs.</title>
        <authorList>
            <person name="Bayer C.A."/>
            <person name="Holley B."/>
            <person name="Fristrom J.W."/>
        </authorList>
    </citation>
    <scope>DEVELOPMENTAL STAGE</scope>
    <scope>CHARACTERIZATION OF ISOFORMS</scope>
    <source>
        <tissue>Imaginal disk</tissue>
        <tissue>Larva</tissue>
    </source>
</reference>
<reference key="6">
    <citation type="journal article" date="1993" name="Development">
        <title>Puffs and PCR: the in vivo dynamics of early gene expression during ecdysone responses in Drosophila.</title>
        <authorList>
            <person name="Huet F."/>
            <person name="Ruiz C."/>
            <person name="Richards G."/>
        </authorList>
    </citation>
    <scope>DEVELOPMENTAL STAGE</scope>
</reference>
<reference key="7">
    <citation type="journal article" date="1997" name="Dev. Biol.">
        <title>Relationships between protein isoforms and genetic functions demonstrate functional redundancy at the Broad-Complex during Drosophila metamorphosis.</title>
        <authorList>
            <person name="Bayer C.A."/>
            <person name="von Kalm L."/>
            <person name="Fristrom J.W."/>
        </authorList>
    </citation>
    <scope>CHARACTERIZATION OF ISOFORMS</scope>
    <scope>MUTAGENESIS</scope>
</reference>
<accession>Q01295</accession>
<accession>O46065</accession>
<accession>O46066</accession>
<accession>Q01293</accession>
<accession>Q01296</accession>
<accession>Q9W571</accession>
<accession>Q9W574</accession>